<sequence>MTTIYNTLTRQKEPFSPIDPENVRMYVCGMTVYDYCHLGHARVMVVFDMIARWLRECGYPLTYVRNITDIDDKIIARAAENGETIGKLTARFIQAMHEDADALGVLRPDIEPKATENIPQMIAMIETLIQNGKAYPAANGDVYYAVREFAAYGQLSGKSLDDLRAGERVEVDGFKRDPLDFVLWKAAKAGEPAWESPWGNGRPGWHIECSAMSENLFGDTFDIHGGGADLQFPHHENEIAQSVGATGHTCGHHHAQTHHGQSIASHVKYWLHNGFIRVDGEKMSKSLGNFFTIREVLKQYDPEVVRFFILRAHYRSPLNYSDAHLDDAKGALTRLYTTLKNTPPADPMPSEAGDDYTRRFYVAMNDDFDTVKAVAVLFELAGEVNKTNDAQLAGRLKALGGIIGLLQRDPTEFLQGGAASDGLSNEEIEDLIARRKQARADKNWAESDRIRDLLNEHKIILEDNAGGTTWRRG</sequence>
<protein>
    <recommendedName>
        <fullName evidence="1">Cysteine--tRNA ligase</fullName>
        <ecNumber evidence="1">6.1.1.16</ecNumber>
    </recommendedName>
    <alternativeName>
        <fullName evidence="1">Cysteinyl-tRNA synthetase</fullName>
        <shortName evidence="1">CysRS</shortName>
    </alternativeName>
</protein>
<accession>Q9JXE6</accession>
<keyword id="KW-0030">Aminoacyl-tRNA synthetase</keyword>
<keyword id="KW-0067">ATP-binding</keyword>
<keyword id="KW-0963">Cytoplasm</keyword>
<keyword id="KW-0436">Ligase</keyword>
<keyword id="KW-0479">Metal-binding</keyword>
<keyword id="KW-0547">Nucleotide-binding</keyword>
<keyword id="KW-0648">Protein biosynthesis</keyword>
<keyword id="KW-1185">Reference proteome</keyword>
<keyword id="KW-0862">Zinc</keyword>
<name>SYC_NEIMB</name>
<proteinExistence type="inferred from homology"/>
<gene>
    <name evidence="1" type="primary">cysS</name>
    <name type="ordered locus">NMB2083</name>
</gene>
<dbReference type="EC" id="6.1.1.16" evidence="1"/>
<dbReference type="EMBL" id="AE002098">
    <property type="protein sequence ID" value="AAF42401.1"/>
    <property type="molecule type" value="Genomic_DNA"/>
</dbReference>
<dbReference type="PIR" id="B81007">
    <property type="entry name" value="B81007"/>
</dbReference>
<dbReference type="RefSeq" id="NP_275072.1">
    <property type="nucleotide sequence ID" value="NC_003112.2"/>
</dbReference>
<dbReference type="RefSeq" id="WP_002225718.1">
    <property type="nucleotide sequence ID" value="NC_003112.2"/>
</dbReference>
<dbReference type="SMR" id="Q9JXE6"/>
<dbReference type="FunCoup" id="Q9JXE6">
    <property type="interactions" value="457"/>
</dbReference>
<dbReference type="STRING" id="122586.NMB2083"/>
<dbReference type="PaxDb" id="122586-NMB2083"/>
<dbReference type="KEGG" id="nme:NMB2083"/>
<dbReference type="PATRIC" id="fig|122586.8.peg.2664"/>
<dbReference type="HOGENOM" id="CLU_013528_0_1_4"/>
<dbReference type="InParanoid" id="Q9JXE6"/>
<dbReference type="OrthoDB" id="9815130at2"/>
<dbReference type="Proteomes" id="UP000000425">
    <property type="component" value="Chromosome"/>
</dbReference>
<dbReference type="GO" id="GO:0005737">
    <property type="term" value="C:cytoplasm"/>
    <property type="evidence" value="ECO:0000318"/>
    <property type="project" value="GO_Central"/>
</dbReference>
<dbReference type="GO" id="GO:0005829">
    <property type="term" value="C:cytosol"/>
    <property type="evidence" value="ECO:0000318"/>
    <property type="project" value="GO_Central"/>
</dbReference>
<dbReference type="GO" id="GO:0005524">
    <property type="term" value="F:ATP binding"/>
    <property type="evidence" value="ECO:0000318"/>
    <property type="project" value="GO_Central"/>
</dbReference>
<dbReference type="GO" id="GO:0004817">
    <property type="term" value="F:cysteine-tRNA ligase activity"/>
    <property type="evidence" value="ECO:0000318"/>
    <property type="project" value="GO_Central"/>
</dbReference>
<dbReference type="GO" id="GO:0008270">
    <property type="term" value="F:zinc ion binding"/>
    <property type="evidence" value="ECO:0007669"/>
    <property type="project" value="UniProtKB-UniRule"/>
</dbReference>
<dbReference type="GO" id="GO:0006423">
    <property type="term" value="P:cysteinyl-tRNA aminoacylation"/>
    <property type="evidence" value="ECO:0000318"/>
    <property type="project" value="GO_Central"/>
</dbReference>
<dbReference type="CDD" id="cd07963">
    <property type="entry name" value="Anticodon_Ia_Cys"/>
    <property type="match status" value="1"/>
</dbReference>
<dbReference type="CDD" id="cd00672">
    <property type="entry name" value="CysRS_core"/>
    <property type="match status" value="1"/>
</dbReference>
<dbReference type="FunFam" id="3.40.50.620:FF:000009">
    <property type="entry name" value="Cysteine--tRNA ligase"/>
    <property type="match status" value="1"/>
</dbReference>
<dbReference type="Gene3D" id="1.20.120.1910">
    <property type="entry name" value="Cysteine-tRNA ligase, C-terminal anti-codon recognition domain"/>
    <property type="match status" value="1"/>
</dbReference>
<dbReference type="Gene3D" id="3.40.50.620">
    <property type="entry name" value="HUPs"/>
    <property type="match status" value="1"/>
</dbReference>
<dbReference type="HAMAP" id="MF_00041">
    <property type="entry name" value="Cys_tRNA_synth"/>
    <property type="match status" value="1"/>
</dbReference>
<dbReference type="InterPro" id="IPR015803">
    <property type="entry name" value="Cys-tRNA-ligase"/>
</dbReference>
<dbReference type="InterPro" id="IPR015273">
    <property type="entry name" value="Cys-tRNA-synt_Ia_DALR"/>
</dbReference>
<dbReference type="InterPro" id="IPR024909">
    <property type="entry name" value="Cys-tRNA/MSH_ligase"/>
</dbReference>
<dbReference type="InterPro" id="IPR056411">
    <property type="entry name" value="CysS_C"/>
</dbReference>
<dbReference type="InterPro" id="IPR014729">
    <property type="entry name" value="Rossmann-like_a/b/a_fold"/>
</dbReference>
<dbReference type="InterPro" id="IPR032678">
    <property type="entry name" value="tRNA-synt_1_cat_dom"/>
</dbReference>
<dbReference type="InterPro" id="IPR009080">
    <property type="entry name" value="tRNAsynth_Ia_anticodon-bd"/>
</dbReference>
<dbReference type="NCBIfam" id="TIGR00435">
    <property type="entry name" value="cysS"/>
    <property type="match status" value="1"/>
</dbReference>
<dbReference type="PANTHER" id="PTHR10890:SF3">
    <property type="entry name" value="CYSTEINE--TRNA LIGASE, CYTOPLASMIC"/>
    <property type="match status" value="1"/>
</dbReference>
<dbReference type="PANTHER" id="PTHR10890">
    <property type="entry name" value="CYSTEINYL-TRNA SYNTHETASE"/>
    <property type="match status" value="1"/>
</dbReference>
<dbReference type="Pfam" id="PF23493">
    <property type="entry name" value="CysS_C"/>
    <property type="match status" value="1"/>
</dbReference>
<dbReference type="Pfam" id="PF09190">
    <property type="entry name" value="DALR_2"/>
    <property type="match status" value="1"/>
</dbReference>
<dbReference type="Pfam" id="PF01406">
    <property type="entry name" value="tRNA-synt_1e"/>
    <property type="match status" value="1"/>
</dbReference>
<dbReference type="PRINTS" id="PR00983">
    <property type="entry name" value="TRNASYNTHCYS"/>
</dbReference>
<dbReference type="SMART" id="SM00840">
    <property type="entry name" value="DALR_2"/>
    <property type="match status" value="1"/>
</dbReference>
<dbReference type="SUPFAM" id="SSF47323">
    <property type="entry name" value="Anticodon-binding domain of a subclass of class I aminoacyl-tRNA synthetases"/>
    <property type="match status" value="1"/>
</dbReference>
<dbReference type="SUPFAM" id="SSF52374">
    <property type="entry name" value="Nucleotidylyl transferase"/>
    <property type="match status" value="1"/>
</dbReference>
<comment type="catalytic activity">
    <reaction evidence="1">
        <text>tRNA(Cys) + L-cysteine + ATP = L-cysteinyl-tRNA(Cys) + AMP + diphosphate</text>
        <dbReference type="Rhea" id="RHEA:17773"/>
        <dbReference type="Rhea" id="RHEA-COMP:9661"/>
        <dbReference type="Rhea" id="RHEA-COMP:9679"/>
        <dbReference type="ChEBI" id="CHEBI:30616"/>
        <dbReference type="ChEBI" id="CHEBI:33019"/>
        <dbReference type="ChEBI" id="CHEBI:35235"/>
        <dbReference type="ChEBI" id="CHEBI:78442"/>
        <dbReference type="ChEBI" id="CHEBI:78517"/>
        <dbReference type="ChEBI" id="CHEBI:456215"/>
        <dbReference type="EC" id="6.1.1.16"/>
    </reaction>
</comment>
<comment type="cofactor">
    <cofactor evidence="1">
        <name>Zn(2+)</name>
        <dbReference type="ChEBI" id="CHEBI:29105"/>
    </cofactor>
    <text evidence="1">Binds 1 zinc ion per subunit.</text>
</comment>
<comment type="subunit">
    <text evidence="1">Monomer.</text>
</comment>
<comment type="subcellular location">
    <subcellularLocation>
        <location evidence="1">Cytoplasm</location>
    </subcellularLocation>
</comment>
<comment type="similarity">
    <text evidence="1">Belongs to the class-I aminoacyl-tRNA synthetase family.</text>
</comment>
<reference key="1">
    <citation type="journal article" date="2000" name="Science">
        <title>Complete genome sequence of Neisseria meningitidis serogroup B strain MC58.</title>
        <authorList>
            <person name="Tettelin H."/>
            <person name="Saunders N.J."/>
            <person name="Heidelberg J.F."/>
            <person name="Jeffries A.C."/>
            <person name="Nelson K.E."/>
            <person name="Eisen J.A."/>
            <person name="Ketchum K.A."/>
            <person name="Hood D.W."/>
            <person name="Peden J.F."/>
            <person name="Dodson R.J."/>
            <person name="Nelson W.C."/>
            <person name="Gwinn M.L."/>
            <person name="DeBoy R.T."/>
            <person name="Peterson J.D."/>
            <person name="Hickey E.K."/>
            <person name="Haft D.H."/>
            <person name="Salzberg S.L."/>
            <person name="White O."/>
            <person name="Fleischmann R.D."/>
            <person name="Dougherty B.A."/>
            <person name="Mason T.M."/>
            <person name="Ciecko A."/>
            <person name="Parksey D.S."/>
            <person name="Blair E."/>
            <person name="Cittone H."/>
            <person name="Clark E.B."/>
            <person name="Cotton M.D."/>
            <person name="Utterback T.R."/>
            <person name="Khouri H.M."/>
            <person name="Qin H."/>
            <person name="Vamathevan J.J."/>
            <person name="Gill J."/>
            <person name="Scarlato V."/>
            <person name="Masignani V."/>
            <person name="Pizza M."/>
            <person name="Grandi G."/>
            <person name="Sun L."/>
            <person name="Smith H.O."/>
            <person name="Fraser C.M."/>
            <person name="Moxon E.R."/>
            <person name="Rappuoli R."/>
            <person name="Venter J.C."/>
        </authorList>
    </citation>
    <scope>NUCLEOTIDE SEQUENCE [LARGE SCALE GENOMIC DNA]</scope>
    <source>
        <strain>ATCC BAA-335 / MC58</strain>
    </source>
</reference>
<feature type="chain" id="PRO_0000159444" description="Cysteine--tRNA ligase">
    <location>
        <begin position="1"/>
        <end position="473"/>
    </location>
</feature>
<feature type="short sequence motif" description="'HIGH' region">
    <location>
        <begin position="30"/>
        <end position="40"/>
    </location>
</feature>
<feature type="short sequence motif" description="'KMSKS' region">
    <location>
        <begin position="282"/>
        <end position="286"/>
    </location>
</feature>
<feature type="binding site" evidence="1">
    <location>
        <position position="28"/>
    </location>
    <ligand>
        <name>Zn(2+)</name>
        <dbReference type="ChEBI" id="CHEBI:29105"/>
    </ligand>
</feature>
<feature type="binding site" evidence="1">
    <location>
        <position position="209"/>
    </location>
    <ligand>
        <name>Zn(2+)</name>
        <dbReference type="ChEBI" id="CHEBI:29105"/>
    </ligand>
</feature>
<feature type="binding site" evidence="1">
    <location>
        <position position="234"/>
    </location>
    <ligand>
        <name>Zn(2+)</name>
        <dbReference type="ChEBI" id="CHEBI:29105"/>
    </ligand>
</feature>
<feature type="binding site" evidence="1">
    <location>
        <position position="238"/>
    </location>
    <ligand>
        <name>Zn(2+)</name>
        <dbReference type="ChEBI" id="CHEBI:29105"/>
    </ligand>
</feature>
<feature type="binding site" evidence="1">
    <location>
        <position position="285"/>
    </location>
    <ligand>
        <name>ATP</name>
        <dbReference type="ChEBI" id="CHEBI:30616"/>
    </ligand>
</feature>
<evidence type="ECO:0000255" key="1">
    <source>
        <dbReference type="HAMAP-Rule" id="MF_00041"/>
    </source>
</evidence>
<organism>
    <name type="scientific">Neisseria meningitidis serogroup B (strain ATCC BAA-335 / MC58)</name>
    <dbReference type="NCBI Taxonomy" id="122586"/>
    <lineage>
        <taxon>Bacteria</taxon>
        <taxon>Pseudomonadati</taxon>
        <taxon>Pseudomonadota</taxon>
        <taxon>Betaproteobacteria</taxon>
        <taxon>Neisseriales</taxon>
        <taxon>Neisseriaceae</taxon>
        <taxon>Neisseria</taxon>
    </lineage>
</organism>